<reference key="1">
    <citation type="journal article" date="2001" name="Proc. Natl. Acad. Sci. U.S.A.">
        <title>Nucleotide sequence and predicted functions of the entire Sinorhizobium meliloti pSymA megaplasmid.</title>
        <authorList>
            <person name="Barnett M.J."/>
            <person name="Fisher R.F."/>
            <person name="Jones T."/>
            <person name="Komp C."/>
            <person name="Abola A.P."/>
            <person name="Barloy-Hubler F."/>
            <person name="Bowser L."/>
            <person name="Capela D."/>
            <person name="Galibert F."/>
            <person name="Gouzy J."/>
            <person name="Gurjal M."/>
            <person name="Hong A."/>
            <person name="Huizar L."/>
            <person name="Hyman R.W."/>
            <person name="Kahn D."/>
            <person name="Kahn M.L."/>
            <person name="Kalman S."/>
            <person name="Keating D.H."/>
            <person name="Palm C."/>
            <person name="Peck M.C."/>
            <person name="Surzycki R."/>
            <person name="Wells D.H."/>
            <person name="Yeh K.-C."/>
            <person name="Davis R.W."/>
            <person name="Federspiel N.A."/>
            <person name="Long S.R."/>
        </authorList>
    </citation>
    <scope>NUCLEOTIDE SEQUENCE [LARGE SCALE GENOMIC DNA]</scope>
    <source>
        <strain>1021</strain>
    </source>
</reference>
<reference key="2">
    <citation type="journal article" date="2001" name="Science">
        <title>The composite genome of the legume symbiont Sinorhizobium meliloti.</title>
        <authorList>
            <person name="Galibert F."/>
            <person name="Finan T.M."/>
            <person name="Long S.R."/>
            <person name="Puehler A."/>
            <person name="Abola P."/>
            <person name="Ampe F."/>
            <person name="Barloy-Hubler F."/>
            <person name="Barnett M.J."/>
            <person name="Becker A."/>
            <person name="Boistard P."/>
            <person name="Bothe G."/>
            <person name="Boutry M."/>
            <person name="Bowser L."/>
            <person name="Buhrmester J."/>
            <person name="Cadieu E."/>
            <person name="Capela D."/>
            <person name="Chain P."/>
            <person name="Cowie A."/>
            <person name="Davis R.W."/>
            <person name="Dreano S."/>
            <person name="Federspiel N.A."/>
            <person name="Fisher R.F."/>
            <person name="Gloux S."/>
            <person name="Godrie T."/>
            <person name="Goffeau A."/>
            <person name="Golding B."/>
            <person name="Gouzy J."/>
            <person name="Gurjal M."/>
            <person name="Hernandez-Lucas I."/>
            <person name="Hong A."/>
            <person name="Huizar L."/>
            <person name="Hyman R.W."/>
            <person name="Jones T."/>
            <person name="Kahn D."/>
            <person name="Kahn M.L."/>
            <person name="Kalman S."/>
            <person name="Keating D.H."/>
            <person name="Kiss E."/>
            <person name="Komp C."/>
            <person name="Lelaure V."/>
            <person name="Masuy D."/>
            <person name="Palm C."/>
            <person name="Peck M.C."/>
            <person name="Pohl T.M."/>
            <person name="Portetelle D."/>
            <person name="Purnelle B."/>
            <person name="Ramsperger U."/>
            <person name="Surzycki R."/>
            <person name="Thebault P."/>
            <person name="Vandenbol M."/>
            <person name="Vorhoelter F.J."/>
            <person name="Weidner S."/>
            <person name="Wells D.H."/>
            <person name="Wong K."/>
            <person name="Yeh K.-C."/>
            <person name="Batut J."/>
        </authorList>
    </citation>
    <scope>NUCLEOTIDE SEQUENCE [LARGE SCALE GENOMIC DNA]</scope>
    <source>
        <strain>1021</strain>
    </source>
</reference>
<geneLocation type="plasmid">
    <name>pSymA</name>
    <name>megaplasmid 1</name>
</geneLocation>
<accession>Q92YY3</accession>
<feature type="chain" id="PRO_0000220214" description="UPF0261 protein RA0729">
    <location>
        <begin position="1"/>
        <end position="398"/>
    </location>
</feature>
<dbReference type="EMBL" id="AE006469">
    <property type="protein sequence ID" value="AAK65387.1"/>
    <property type="molecule type" value="Genomic_DNA"/>
</dbReference>
<dbReference type="PIR" id="A95353">
    <property type="entry name" value="A95353"/>
</dbReference>
<dbReference type="RefSeq" id="NP_435975.1">
    <property type="nucleotide sequence ID" value="NC_003037.1"/>
</dbReference>
<dbReference type="RefSeq" id="WP_010967705.1">
    <property type="nucleotide sequence ID" value="NC_003037.1"/>
</dbReference>
<dbReference type="SMR" id="Q92YY3"/>
<dbReference type="EnsemblBacteria" id="AAK65387">
    <property type="protein sequence ID" value="AAK65387"/>
    <property type="gene ID" value="SMa1334"/>
</dbReference>
<dbReference type="KEGG" id="sme:SMa1334"/>
<dbReference type="PATRIC" id="fig|266834.11.peg.751"/>
<dbReference type="HOGENOM" id="CLU_036813_1_0_5"/>
<dbReference type="OrthoDB" id="9776369at2"/>
<dbReference type="PRO" id="PR:Q92YY3"/>
<dbReference type="Proteomes" id="UP000001976">
    <property type="component" value="Plasmid pSymA"/>
</dbReference>
<dbReference type="CDD" id="cd15488">
    <property type="entry name" value="Tm-1-like"/>
    <property type="match status" value="1"/>
</dbReference>
<dbReference type="Gene3D" id="3.40.50.12030">
    <property type="entry name" value="Uncharacterised protein family UPF0261, NC domain"/>
    <property type="match status" value="1"/>
</dbReference>
<dbReference type="Gene3D" id="3.40.50.12020">
    <property type="entry name" value="Uncharacterised protein family UPF0261, NN domain"/>
    <property type="match status" value="1"/>
</dbReference>
<dbReference type="HAMAP" id="MF_00677">
    <property type="entry name" value="UPF0261"/>
    <property type="match status" value="1"/>
</dbReference>
<dbReference type="InterPro" id="IPR051353">
    <property type="entry name" value="Tobamovirus_resist_UPF0261"/>
</dbReference>
<dbReference type="InterPro" id="IPR008322">
    <property type="entry name" value="UPF0261"/>
</dbReference>
<dbReference type="InterPro" id="IPR056778">
    <property type="entry name" value="UPF0261_C"/>
</dbReference>
<dbReference type="InterPro" id="IPR044122">
    <property type="entry name" value="UPF0261_N"/>
</dbReference>
<dbReference type="NCBIfam" id="NF002673">
    <property type="entry name" value="PRK02399.1-1"/>
    <property type="match status" value="1"/>
</dbReference>
<dbReference type="NCBIfam" id="NF002674">
    <property type="entry name" value="PRK02399.1-2"/>
    <property type="match status" value="1"/>
</dbReference>
<dbReference type="NCBIfam" id="NF002675">
    <property type="entry name" value="PRK02399.1-3"/>
    <property type="match status" value="1"/>
</dbReference>
<dbReference type="PANTHER" id="PTHR31862">
    <property type="entry name" value="UPF0261 DOMAIN PROTEIN (AFU_ORTHOLOGUE AFUA_1G10120)"/>
    <property type="match status" value="1"/>
</dbReference>
<dbReference type="PANTHER" id="PTHR31862:SF1">
    <property type="entry name" value="UPF0261 DOMAIN PROTEIN (AFU_ORTHOLOGUE AFUA_1G10120)"/>
    <property type="match status" value="1"/>
</dbReference>
<dbReference type="Pfam" id="PF06792">
    <property type="entry name" value="UPF0261"/>
    <property type="match status" value="1"/>
</dbReference>
<dbReference type="Pfam" id="PF23189">
    <property type="entry name" value="UPF0261_C"/>
    <property type="match status" value="1"/>
</dbReference>
<dbReference type="PIRSF" id="PIRSF033271">
    <property type="entry name" value="UCP033271"/>
    <property type="match status" value="1"/>
</dbReference>
<evidence type="ECO:0000255" key="1">
    <source>
        <dbReference type="HAMAP-Rule" id="MF_00677"/>
    </source>
</evidence>
<sequence length="398" mass="41763">MKRIYVVGTADTKGEELVYLASCVEAAGGRPVLVDVGTRRPTVLVDISAETVAAVHPGGAAAVLSGNDRGTAIAAMGEAFARFLPARDDVAGVVGMGGGGGTSIITAGMRRLPLGLPKVMVSTLASGDVGPYVDVSDIIMMPSVTDMAGLNRVSRVILKNAAEAITAMANRPAEETASKPAIGLTMFGVTTPCVTAIVERLKADHDCLVFHATGTGGRAMEKLADSGLLSGVLDITTTEVCDLVFGGVLPATEDRFGAIARTDLPYVGSVGALDMVNFWAPETVPERYSGRLLYRHNPNVTLMRTTPEECAAIGRWIGAKLNLCSGPLRFLIPERGVSALDIEGGAFFDPAADAALFEALETTVNRSDRRRIERLPLHINDPQFAEAAVAAYRDIANP</sequence>
<protein>
    <recommendedName>
        <fullName evidence="1">UPF0261 protein RA0729</fullName>
    </recommendedName>
</protein>
<name>Y4129_RHIME</name>
<keyword id="KW-0614">Plasmid</keyword>
<keyword id="KW-1185">Reference proteome</keyword>
<gene>
    <name type="ordered locus">RA0729</name>
    <name type="ORF">SMa1334</name>
</gene>
<proteinExistence type="inferred from homology"/>
<comment type="similarity">
    <text evidence="1">Belongs to the UPF0261 family.</text>
</comment>
<organism>
    <name type="scientific">Rhizobium meliloti (strain 1021)</name>
    <name type="common">Ensifer meliloti</name>
    <name type="synonym">Sinorhizobium meliloti</name>
    <dbReference type="NCBI Taxonomy" id="266834"/>
    <lineage>
        <taxon>Bacteria</taxon>
        <taxon>Pseudomonadati</taxon>
        <taxon>Pseudomonadota</taxon>
        <taxon>Alphaproteobacteria</taxon>
        <taxon>Hyphomicrobiales</taxon>
        <taxon>Rhizobiaceae</taxon>
        <taxon>Sinorhizobium/Ensifer group</taxon>
        <taxon>Sinorhizobium</taxon>
    </lineage>
</organism>